<name>ATP5E_HUMAN</name>
<organism>
    <name type="scientific">Homo sapiens</name>
    <name type="common">Human</name>
    <dbReference type="NCBI Taxonomy" id="9606"/>
    <lineage>
        <taxon>Eukaryota</taxon>
        <taxon>Metazoa</taxon>
        <taxon>Chordata</taxon>
        <taxon>Craniata</taxon>
        <taxon>Vertebrata</taxon>
        <taxon>Euteleostomi</taxon>
        <taxon>Mammalia</taxon>
        <taxon>Eutheria</taxon>
        <taxon>Euarchontoglires</taxon>
        <taxon>Primates</taxon>
        <taxon>Haplorrhini</taxon>
        <taxon>Catarrhini</taxon>
        <taxon>Hominidae</taxon>
        <taxon>Homo</taxon>
    </lineage>
</organism>
<reference key="1">
    <citation type="journal article" date="2000" name="Biochem. J.">
        <title>Cloning, characterization and mapping of the human ATP5E gene, identification of pseudogene ATP5EP1, and definition of the ATP5E motif.</title>
        <authorList>
            <person name="Tu Q."/>
            <person name="Yu L."/>
            <person name="Zhang P."/>
            <person name="Zhang M."/>
            <person name="Zhang H."/>
            <person name="Jiang J."/>
            <person name="Chen C."/>
            <person name="Zhao S."/>
        </authorList>
    </citation>
    <scope>NUCLEOTIDE SEQUENCE [MRNA]</scope>
</reference>
<reference key="2">
    <citation type="journal article" date="2000" name="Proc. Natl. Acad. Sci. U.S.A.">
        <title>Gene expression profiling in the human hypothalamus-pituitary-adrenal axis and full-length cDNA cloning.</title>
        <authorList>
            <person name="Hu R.-M."/>
            <person name="Han Z.-G."/>
            <person name="Song H.-D."/>
            <person name="Peng Y.-D."/>
            <person name="Huang Q.-H."/>
            <person name="Ren S.-X."/>
            <person name="Gu Y.-J."/>
            <person name="Huang C.-H."/>
            <person name="Li Y.-B."/>
            <person name="Jiang C.-L."/>
            <person name="Fu G."/>
            <person name="Zhang Q.-H."/>
            <person name="Gu B.-W."/>
            <person name="Dai M."/>
            <person name="Mao Y.-F."/>
            <person name="Gao G.-F."/>
            <person name="Rong R."/>
            <person name="Ye M."/>
            <person name="Zhou J."/>
            <person name="Xu S.-H."/>
            <person name="Gu J."/>
            <person name="Shi J.-X."/>
            <person name="Jin W.-R."/>
            <person name="Zhang C.-K."/>
            <person name="Wu T.-M."/>
            <person name="Huang G.-Y."/>
            <person name="Chen Z."/>
            <person name="Chen M.-D."/>
            <person name="Chen J.-L."/>
        </authorList>
    </citation>
    <scope>NUCLEOTIDE SEQUENCE [LARGE SCALE MRNA]</scope>
    <source>
        <tissue>Pituitary</tissue>
    </source>
</reference>
<reference key="3">
    <citation type="journal article" date="2004" name="Nat. Genet.">
        <title>Complete sequencing and characterization of 21,243 full-length human cDNAs.</title>
        <authorList>
            <person name="Ota T."/>
            <person name="Suzuki Y."/>
            <person name="Nishikawa T."/>
            <person name="Otsuki T."/>
            <person name="Sugiyama T."/>
            <person name="Irie R."/>
            <person name="Wakamatsu A."/>
            <person name="Hayashi K."/>
            <person name="Sato H."/>
            <person name="Nagai K."/>
            <person name="Kimura K."/>
            <person name="Makita H."/>
            <person name="Sekine M."/>
            <person name="Obayashi M."/>
            <person name="Nishi T."/>
            <person name="Shibahara T."/>
            <person name="Tanaka T."/>
            <person name="Ishii S."/>
            <person name="Yamamoto J."/>
            <person name="Saito K."/>
            <person name="Kawai Y."/>
            <person name="Isono Y."/>
            <person name="Nakamura Y."/>
            <person name="Nagahari K."/>
            <person name="Murakami K."/>
            <person name="Yasuda T."/>
            <person name="Iwayanagi T."/>
            <person name="Wagatsuma M."/>
            <person name="Shiratori A."/>
            <person name="Sudo H."/>
            <person name="Hosoiri T."/>
            <person name="Kaku Y."/>
            <person name="Kodaira H."/>
            <person name="Kondo H."/>
            <person name="Sugawara M."/>
            <person name="Takahashi M."/>
            <person name="Kanda K."/>
            <person name="Yokoi T."/>
            <person name="Furuya T."/>
            <person name="Kikkawa E."/>
            <person name="Omura Y."/>
            <person name="Abe K."/>
            <person name="Kamihara K."/>
            <person name="Katsuta N."/>
            <person name="Sato K."/>
            <person name="Tanikawa M."/>
            <person name="Yamazaki M."/>
            <person name="Ninomiya K."/>
            <person name="Ishibashi T."/>
            <person name="Yamashita H."/>
            <person name="Murakawa K."/>
            <person name="Fujimori K."/>
            <person name="Tanai H."/>
            <person name="Kimata M."/>
            <person name="Watanabe M."/>
            <person name="Hiraoka S."/>
            <person name="Chiba Y."/>
            <person name="Ishida S."/>
            <person name="Ono Y."/>
            <person name="Takiguchi S."/>
            <person name="Watanabe S."/>
            <person name="Yosida M."/>
            <person name="Hotuta T."/>
            <person name="Kusano J."/>
            <person name="Kanehori K."/>
            <person name="Takahashi-Fujii A."/>
            <person name="Hara H."/>
            <person name="Tanase T.-O."/>
            <person name="Nomura Y."/>
            <person name="Togiya S."/>
            <person name="Komai F."/>
            <person name="Hara R."/>
            <person name="Takeuchi K."/>
            <person name="Arita M."/>
            <person name="Imose N."/>
            <person name="Musashino K."/>
            <person name="Yuuki H."/>
            <person name="Oshima A."/>
            <person name="Sasaki N."/>
            <person name="Aotsuka S."/>
            <person name="Yoshikawa Y."/>
            <person name="Matsunawa H."/>
            <person name="Ichihara T."/>
            <person name="Shiohata N."/>
            <person name="Sano S."/>
            <person name="Moriya S."/>
            <person name="Momiyama H."/>
            <person name="Satoh N."/>
            <person name="Takami S."/>
            <person name="Terashima Y."/>
            <person name="Suzuki O."/>
            <person name="Nakagawa S."/>
            <person name="Senoh A."/>
            <person name="Mizoguchi H."/>
            <person name="Goto Y."/>
            <person name="Shimizu F."/>
            <person name="Wakebe H."/>
            <person name="Hishigaki H."/>
            <person name="Watanabe T."/>
            <person name="Sugiyama A."/>
            <person name="Takemoto M."/>
            <person name="Kawakami B."/>
            <person name="Yamazaki M."/>
            <person name="Watanabe K."/>
            <person name="Kumagai A."/>
            <person name="Itakura S."/>
            <person name="Fukuzumi Y."/>
            <person name="Fujimori Y."/>
            <person name="Komiyama M."/>
            <person name="Tashiro H."/>
            <person name="Tanigami A."/>
            <person name="Fujiwara T."/>
            <person name="Ono T."/>
            <person name="Yamada K."/>
            <person name="Fujii Y."/>
            <person name="Ozaki K."/>
            <person name="Hirao M."/>
            <person name="Ohmori Y."/>
            <person name="Kawabata A."/>
            <person name="Hikiji T."/>
            <person name="Kobatake N."/>
            <person name="Inagaki H."/>
            <person name="Ikema Y."/>
            <person name="Okamoto S."/>
            <person name="Okitani R."/>
            <person name="Kawakami T."/>
            <person name="Noguchi S."/>
            <person name="Itoh T."/>
            <person name="Shigeta K."/>
            <person name="Senba T."/>
            <person name="Matsumura K."/>
            <person name="Nakajima Y."/>
            <person name="Mizuno T."/>
            <person name="Morinaga M."/>
            <person name="Sasaki M."/>
            <person name="Togashi T."/>
            <person name="Oyama M."/>
            <person name="Hata H."/>
            <person name="Watanabe M."/>
            <person name="Komatsu T."/>
            <person name="Mizushima-Sugano J."/>
            <person name="Satoh T."/>
            <person name="Shirai Y."/>
            <person name="Takahashi Y."/>
            <person name="Nakagawa K."/>
            <person name="Okumura K."/>
            <person name="Nagase T."/>
            <person name="Nomura N."/>
            <person name="Kikuchi H."/>
            <person name="Masuho Y."/>
            <person name="Yamashita R."/>
            <person name="Nakai K."/>
            <person name="Yada T."/>
            <person name="Nakamura Y."/>
            <person name="Ohara O."/>
            <person name="Isogai T."/>
            <person name="Sugano S."/>
        </authorList>
    </citation>
    <scope>NUCLEOTIDE SEQUENCE [LARGE SCALE MRNA]</scope>
</reference>
<reference key="4">
    <citation type="submission" date="2003-05" db="EMBL/GenBank/DDBJ databases">
        <title>Cloning of human full-length CDSs in BD Creator(TM) system donor vector.</title>
        <authorList>
            <person name="Kalnine N."/>
            <person name="Chen X."/>
            <person name="Rolfs A."/>
            <person name="Halleck A."/>
            <person name="Hines L."/>
            <person name="Eisenstein S."/>
            <person name="Koundinya M."/>
            <person name="Raphael J."/>
            <person name="Moreira D."/>
            <person name="Kelley T."/>
            <person name="LaBaer J."/>
            <person name="Lin Y."/>
            <person name="Phelan M."/>
            <person name="Farmer A."/>
        </authorList>
    </citation>
    <scope>NUCLEOTIDE SEQUENCE [LARGE SCALE MRNA]</scope>
</reference>
<reference key="5">
    <citation type="journal article" date="2001" name="Nature">
        <title>The DNA sequence and comparative analysis of human chromosome 20.</title>
        <authorList>
            <person name="Deloukas P."/>
            <person name="Matthews L.H."/>
            <person name="Ashurst J.L."/>
            <person name="Burton J."/>
            <person name="Gilbert J.G.R."/>
            <person name="Jones M."/>
            <person name="Stavrides G."/>
            <person name="Almeida J.P."/>
            <person name="Babbage A.K."/>
            <person name="Bagguley C.L."/>
            <person name="Bailey J."/>
            <person name="Barlow K.F."/>
            <person name="Bates K.N."/>
            <person name="Beard L.M."/>
            <person name="Beare D.M."/>
            <person name="Beasley O.P."/>
            <person name="Bird C.P."/>
            <person name="Blakey S.E."/>
            <person name="Bridgeman A.M."/>
            <person name="Brown A.J."/>
            <person name="Buck D."/>
            <person name="Burrill W.D."/>
            <person name="Butler A.P."/>
            <person name="Carder C."/>
            <person name="Carter N.P."/>
            <person name="Chapman J.C."/>
            <person name="Clamp M."/>
            <person name="Clark G."/>
            <person name="Clark L.N."/>
            <person name="Clark S.Y."/>
            <person name="Clee C.M."/>
            <person name="Clegg S."/>
            <person name="Cobley V.E."/>
            <person name="Collier R.E."/>
            <person name="Connor R.E."/>
            <person name="Corby N.R."/>
            <person name="Coulson A."/>
            <person name="Coville G.J."/>
            <person name="Deadman R."/>
            <person name="Dhami P.D."/>
            <person name="Dunn M."/>
            <person name="Ellington A.G."/>
            <person name="Frankland J.A."/>
            <person name="Fraser A."/>
            <person name="French L."/>
            <person name="Garner P."/>
            <person name="Grafham D.V."/>
            <person name="Griffiths C."/>
            <person name="Griffiths M.N.D."/>
            <person name="Gwilliam R."/>
            <person name="Hall R.E."/>
            <person name="Hammond S."/>
            <person name="Harley J.L."/>
            <person name="Heath P.D."/>
            <person name="Ho S."/>
            <person name="Holden J.L."/>
            <person name="Howden P.J."/>
            <person name="Huckle E."/>
            <person name="Hunt A.R."/>
            <person name="Hunt S.E."/>
            <person name="Jekosch K."/>
            <person name="Johnson C.M."/>
            <person name="Johnson D."/>
            <person name="Kay M.P."/>
            <person name="Kimberley A.M."/>
            <person name="King A."/>
            <person name="Knights A."/>
            <person name="Laird G.K."/>
            <person name="Lawlor S."/>
            <person name="Lehvaeslaiho M.H."/>
            <person name="Leversha M.A."/>
            <person name="Lloyd C."/>
            <person name="Lloyd D.M."/>
            <person name="Lovell J.D."/>
            <person name="Marsh V.L."/>
            <person name="Martin S.L."/>
            <person name="McConnachie L.J."/>
            <person name="McLay K."/>
            <person name="McMurray A.A."/>
            <person name="Milne S.A."/>
            <person name="Mistry D."/>
            <person name="Moore M.J.F."/>
            <person name="Mullikin J.C."/>
            <person name="Nickerson T."/>
            <person name="Oliver K."/>
            <person name="Parker A."/>
            <person name="Patel R."/>
            <person name="Pearce T.A.V."/>
            <person name="Peck A.I."/>
            <person name="Phillimore B.J.C.T."/>
            <person name="Prathalingam S.R."/>
            <person name="Plumb R.W."/>
            <person name="Ramsay H."/>
            <person name="Rice C.M."/>
            <person name="Ross M.T."/>
            <person name="Scott C.E."/>
            <person name="Sehra H.K."/>
            <person name="Shownkeen R."/>
            <person name="Sims S."/>
            <person name="Skuce C.D."/>
            <person name="Smith M.L."/>
            <person name="Soderlund C."/>
            <person name="Steward C.A."/>
            <person name="Sulston J.E."/>
            <person name="Swann R.M."/>
            <person name="Sycamore N."/>
            <person name="Taylor R."/>
            <person name="Tee L."/>
            <person name="Thomas D.W."/>
            <person name="Thorpe A."/>
            <person name="Tracey A."/>
            <person name="Tromans A.C."/>
            <person name="Vaudin M."/>
            <person name="Wall M."/>
            <person name="Wallis J.M."/>
            <person name="Whitehead S.L."/>
            <person name="Whittaker P."/>
            <person name="Willey D.L."/>
            <person name="Williams L."/>
            <person name="Williams S.A."/>
            <person name="Wilming L."/>
            <person name="Wray P.W."/>
            <person name="Hubbard T."/>
            <person name="Durbin R.M."/>
            <person name="Bentley D.R."/>
            <person name="Beck S."/>
            <person name="Rogers J."/>
        </authorList>
    </citation>
    <scope>NUCLEOTIDE SEQUENCE [LARGE SCALE GENOMIC DNA]</scope>
</reference>
<reference key="6">
    <citation type="submission" date="2005-09" db="EMBL/GenBank/DDBJ databases">
        <authorList>
            <person name="Mural R.J."/>
            <person name="Istrail S."/>
            <person name="Sutton G.G."/>
            <person name="Florea L."/>
            <person name="Halpern A.L."/>
            <person name="Mobarry C.M."/>
            <person name="Lippert R."/>
            <person name="Walenz B."/>
            <person name="Shatkay H."/>
            <person name="Dew I."/>
            <person name="Miller J.R."/>
            <person name="Flanigan M.J."/>
            <person name="Edwards N.J."/>
            <person name="Bolanos R."/>
            <person name="Fasulo D."/>
            <person name="Halldorsson B.V."/>
            <person name="Hannenhalli S."/>
            <person name="Turner R."/>
            <person name="Yooseph S."/>
            <person name="Lu F."/>
            <person name="Nusskern D.R."/>
            <person name="Shue B.C."/>
            <person name="Zheng X.H."/>
            <person name="Zhong F."/>
            <person name="Delcher A.L."/>
            <person name="Huson D.H."/>
            <person name="Kravitz S.A."/>
            <person name="Mouchard L."/>
            <person name="Reinert K."/>
            <person name="Remington K.A."/>
            <person name="Clark A.G."/>
            <person name="Waterman M.S."/>
            <person name="Eichler E.E."/>
            <person name="Adams M.D."/>
            <person name="Hunkapiller M.W."/>
            <person name="Myers E.W."/>
            <person name="Venter J.C."/>
        </authorList>
    </citation>
    <scope>NUCLEOTIDE SEQUENCE [LARGE SCALE GENOMIC DNA]</scope>
</reference>
<reference key="7">
    <citation type="journal article" date="2004" name="Genome Res.">
        <title>The status, quality, and expansion of the NIH full-length cDNA project: the Mammalian Gene Collection (MGC).</title>
        <authorList>
            <consortium name="The MGC Project Team"/>
        </authorList>
    </citation>
    <scope>NUCLEOTIDE SEQUENCE [LARGE SCALE MRNA]</scope>
    <source>
        <tissue>Kidney</tissue>
        <tissue>Skin</tissue>
    </source>
</reference>
<reference key="8">
    <citation type="journal article" date="2009" name="Science">
        <title>Lysine acetylation targets protein complexes and co-regulates major cellular functions.</title>
        <authorList>
            <person name="Choudhary C."/>
            <person name="Kumar C."/>
            <person name="Gnad F."/>
            <person name="Nielsen M.L."/>
            <person name="Rehman M."/>
            <person name="Walther T.C."/>
            <person name="Olsen J.V."/>
            <person name="Mann M."/>
        </authorList>
    </citation>
    <scope>ACETYLATION [LARGE SCALE ANALYSIS] AT LYS-21</scope>
    <scope>IDENTIFICATION BY MASS SPECTROMETRY [LARGE SCALE ANALYSIS]</scope>
</reference>
<reference key="9">
    <citation type="journal article" date="2010" name="Biochim. Biophys. Acta">
        <title>Knockdown of F1 epsilon subunit decreases mitochondrial content of ATP synthase and leads to accumulation of subunit c.</title>
        <authorList>
            <person name="Havlickova V."/>
            <person name="Kaplanova V."/>
            <person name="Nuskova H."/>
            <person name="Drahota Z."/>
            <person name="Houstek J."/>
        </authorList>
    </citation>
    <scope>FUNCTION</scope>
</reference>
<reference key="10">
    <citation type="journal article" date="2015" name="Proteomics">
        <title>N-terminome analysis of the human mitochondrial proteome.</title>
        <authorList>
            <person name="Vaca Jacome A.S."/>
            <person name="Rabilloud T."/>
            <person name="Schaeffer-Reiss C."/>
            <person name="Rompais M."/>
            <person name="Ayoub D."/>
            <person name="Lane L."/>
            <person name="Bairoch A."/>
            <person name="Van Dorsselaer A."/>
            <person name="Carapito C."/>
        </authorList>
    </citation>
    <scope>IDENTIFICATION BY MASS SPECTROMETRY [LARGE SCALE ANALYSIS]</scope>
</reference>
<reference evidence="10 11 12 13 14 15 16 17" key="11">
    <citation type="journal article" date="2023" name="Mol. Cell">
        <title>Structure of the human ATP synthase.</title>
        <authorList>
            <person name="Lai Y."/>
            <person name="Zhang Y."/>
            <person name="Zhou S."/>
            <person name="Xu J."/>
            <person name="Du Z."/>
            <person name="Feng Z."/>
            <person name="Yu L."/>
            <person name="Zhao Z."/>
            <person name="Wang W."/>
            <person name="Tang Y."/>
            <person name="Yang X."/>
            <person name="Guddat L.W."/>
            <person name="Liu F."/>
            <person name="Gao Y."/>
            <person name="Rao Z."/>
            <person name="Gong H."/>
        </authorList>
    </citation>
    <scope>STRUCTURE BY ELECTRON MICROSCOPY (2.53 ANGSTROMS)</scope>
    <scope>IDENTIFICATION IN THE ATP SYNTHASE COMPLEX</scope>
    <scope>FUNCTION</scope>
    <scope>SUBUNIT</scope>
</reference>
<reference key="12">
    <citation type="journal article" date="2010" name="Hum. Mol. Genet.">
        <title>Mitochondrial ATP synthase deficiency due to a mutation in the ATP5E gene for the F1 epsilon subunit.</title>
        <authorList>
            <person name="Mayr J.A."/>
            <person name="Havlickova V."/>
            <person name="Zimmermann F."/>
            <person name="Magler I."/>
            <person name="Kaplanova V."/>
            <person name="Jesina P."/>
            <person name="Pecinova A."/>
            <person name="Nuskova H."/>
            <person name="Koch J."/>
            <person name="Sperl W."/>
            <person name="Houstek J."/>
        </authorList>
    </citation>
    <scope>VARIANT MC5DN3 CYS-12</scope>
</reference>
<reference key="13">
    <citation type="journal article" date="2022" name="Ann. Neurol.">
        <title>Variants in Mitochondrial ATP Synthase Cause Variable Neurologic Phenotypes.</title>
        <authorList>
            <person name="Zech M."/>
            <person name="Kopajtich R."/>
            <person name="Steinbruecker K."/>
            <person name="Bris C."/>
            <person name="Gueguen N."/>
            <person name="Feichtinger R.G."/>
            <person name="Achleitner M.T."/>
            <person name="Duzkale N."/>
            <person name="Perivier M."/>
            <person name="Koch J."/>
            <person name="Engelhardt H."/>
            <person name="Freisinger P."/>
            <person name="Wagner M."/>
            <person name="Brunet T."/>
            <person name="Berutti R."/>
            <person name="Smirnov D."/>
            <person name="Navaratnarajah T."/>
            <person name="Rodenburg R.J.T."/>
            <person name="Pais L.S."/>
            <person name="Austin-Tse C."/>
            <person name="O'Leary M."/>
            <person name="Boesch S."/>
            <person name="Jech R."/>
            <person name="Bakhtiari S."/>
            <person name="Jin S.C."/>
            <person name="Wilbert F."/>
            <person name="Kruer M.C."/>
            <person name="Wortmann S.B."/>
            <person name="Eckenweiler M."/>
            <person name="Mayr J.A."/>
            <person name="Distelmaier F."/>
            <person name="Steinfeld R."/>
            <person name="Winkelmann J."/>
            <person name="Prokisch H."/>
        </authorList>
    </citation>
    <scope>VARIANT MC5DN3 CYS-12</scope>
</reference>
<accession>P56381</accession>
<accession>B2RDD0</accession>
<accession>E1P5H6</accession>
<accession>Q53XU6</accession>
<proteinExistence type="evidence at protein level"/>
<dbReference type="EMBL" id="AF052955">
    <property type="protein sequence ID" value="AAF72736.1"/>
    <property type="molecule type" value="mRNA"/>
</dbReference>
<dbReference type="EMBL" id="AF077045">
    <property type="protein sequence ID" value="AAD27778.1"/>
    <property type="molecule type" value="mRNA"/>
</dbReference>
<dbReference type="EMBL" id="AK315493">
    <property type="protein sequence ID" value="BAG37877.1"/>
    <property type="molecule type" value="mRNA"/>
</dbReference>
<dbReference type="EMBL" id="BT007293">
    <property type="protein sequence ID" value="AAP35957.1"/>
    <property type="molecule type" value="mRNA"/>
</dbReference>
<dbReference type="EMBL" id="AL109840">
    <property type="status" value="NOT_ANNOTATED_CDS"/>
    <property type="molecule type" value="Genomic_DNA"/>
</dbReference>
<dbReference type="EMBL" id="CH471077">
    <property type="protein sequence ID" value="EAW75445.1"/>
    <property type="molecule type" value="Genomic_DNA"/>
</dbReference>
<dbReference type="EMBL" id="CH471077">
    <property type="protein sequence ID" value="EAW75446.1"/>
    <property type="molecule type" value="Genomic_DNA"/>
</dbReference>
<dbReference type="EMBL" id="BC001690">
    <property type="protein sequence ID" value="AAH01690.1"/>
    <property type="molecule type" value="mRNA"/>
</dbReference>
<dbReference type="EMBL" id="BC003671">
    <property type="protein sequence ID" value="AAH03671.1"/>
    <property type="molecule type" value="mRNA"/>
</dbReference>
<dbReference type="EMBL" id="BC105811">
    <property type="protein sequence ID" value="AAI05812.1"/>
    <property type="molecule type" value="mRNA"/>
</dbReference>
<dbReference type="CCDS" id="CCDS13476.1"/>
<dbReference type="RefSeq" id="NP_008817.1">
    <property type="nucleotide sequence ID" value="NM_006886.4"/>
</dbReference>
<dbReference type="PDB" id="8H9F">
    <property type="method" value="EM"/>
    <property type="resolution" value="2.69 A"/>
    <property type="chains" value="I=1-51"/>
</dbReference>
<dbReference type="PDB" id="8H9J">
    <property type="method" value="EM"/>
    <property type="resolution" value="3.26 A"/>
    <property type="chains" value="I=1-51"/>
</dbReference>
<dbReference type="PDB" id="8H9M">
    <property type="method" value="EM"/>
    <property type="resolution" value="3.00 A"/>
    <property type="chains" value="I=1-51"/>
</dbReference>
<dbReference type="PDB" id="8H9Q">
    <property type="method" value="EM"/>
    <property type="resolution" value="3.47 A"/>
    <property type="chains" value="I=1-51"/>
</dbReference>
<dbReference type="PDB" id="8H9S">
    <property type="method" value="EM"/>
    <property type="resolution" value="2.53 A"/>
    <property type="chains" value="I=1-51"/>
</dbReference>
<dbReference type="PDB" id="8H9T">
    <property type="method" value="EM"/>
    <property type="resolution" value="2.77 A"/>
    <property type="chains" value="I=1-51"/>
</dbReference>
<dbReference type="PDB" id="8H9U">
    <property type="method" value="EM"/>
    <property type="resolution" value="2.61 A"/>
    <property type="chains" value="I=1-51"/>
</dbReference>
<dbReference type="PDB" id="8H9V">
    <property type="method" value="EM"/>
    <property type="resolution" value="3.02 A"/>
    <property type="chains" value="I=1-51"/>
</dbReference>
<dbReference type="PDB" id="8KHF">
    <property type="method" value="EM"/>
    <property type="resolution" value="3.13 A"/>
    <property type="chains" value="I=1-51"/>
</dbReference>
<dbReference type="PDB" id="8KI3">
    <property type="method" value="EM"/>
    <property type="resolution" value="2.89 A"/>
    <property type="chains" value="I=1-51"/>
</dbReference>
<dbReference type="PDBsum" id="8H9F"/>
<dbReference type="PDBsum" id="8H9J"/>
<dbReference type="PDBsum" id="8H9M"/>
<dbReference type="PDBsum" id="8H9Q"/>
<dbReference type="PDBsum" id="8H9S"/>
<dbReference type="PDBsum" id="8H9T"/>
<dbReference type="PDBsum" id="8H9U"/>
<dbReference type="PDBsum" id="8H9V"/>
<dbReference type="PDBsum" id="8KHF"/>
<dbReference type="PDBsum" id="8KI3"/>
<dbReference type="EMDB" id="EMD-34565"/>
<dbReference type="EMDB" id="EMD-34569"/>
<dbReference type="EMDB" id="EMD-34573"/>
<dbReference type="EMDB" id="EMD-34577"/>
<dbReference type="EMDB" id="EMD-34580"/>
<dbReference type="EMDB" id="EMD-34581"/>
<dbReference type="EMDB" id="EMD-34582"/>
<dbReference type="EMDB" id="EMD-34583"/>
<dbReference type="EMDB" id="EMD-37243"/>
<dbReference type="EMDB" id="EMD-37251"/>
<dbReference type="SMR" id="P56381"/>
<dbReference type="BioGRID" id="106999">
    <property type="interactions" value="65"/>
</dbReference>
<dbReference type="ComplexPortal" id="CPX-6151">
    <property type="entry name" value="Mitochondrial proton-transporting ATP synthase complex"/>
</dbReference>
<dbReference type="CORUM" id="P56381"/>
<dbReference type="FunCoup" id="P56381">
    <property type="interactions" value="674"/>
</dbReference>
<dbReference type="IntAct" id="P56381">
    <property type="interactions" value="17"/>
</dbReference>
<dbReference type="STRING" id="9606.ENSP00000243997"/>
<dbReference type="DrugBank" id="DB01119">
    <property type="generic name" value="Diazoxide"/>
</dbReference>
<dbReference type="GlyGen" id="P56381">
    <property type="glycosylation" value="1 site, 1 O-linked glycan (1 site)"/>
</dbReference>
<dbReference type="iPTMnet" id="P56381"/>
<dbReference type="PhosphoSitePlus" id="P56381"/>
<dbReference type="BioMuta" id="ATP5E"/>
<dbReference type="jPOST" id="P56381"/>
<dbReference type="MassIVE" id="P56381"/>
<dbReference type="PaxDb" id="9606-ENSP00000243997"/>
<dbReference type="PeptideAtlas" id="P56381"/>
<dbReference type="ProteomicsDB" id="56917"/>
<dbReference type="Pumba" id="P56381"/>
<dbReference type="TopDownProteomics" id="P56381"/>
<dbReference type="Antibodypedia" id="29273">
    <property type="antibodies" value="154 antibodies from 20 providers"/>
</dbReference>
<dbReference type="DNASU" id="514"/>
<dbReference type="Ensembl" id="ENST00000243997.8">
    <property type="protein sequence ID" value="ENSP00000243997.3"/>
    <property type="gene ID" value="ENSG00000124172.10"/>
</dbReference>
<dbReference type="Ensembl" id="ENST00000395659.1">
    <property type="protein sequence ID" value="ENSP00000379019.1"/>
    <property type="gene ID" value="ENSG00000124172.10"/>
</dbReference>
<dbReference type="Ensembl" id="ENST00000395663.1">
    <property type="protein sequence ID" value="ENSP00000379023.1"/>
    <property type="gene ID" value="ENSG00000124172.10"/>
</dbReference>
<dbReference type="GeneID" id="514"/>
<dbReference type="KEGG" id="hsa:514"/>
<dbReference type="MANE-Select" id="ENST00000243997.8">
    <property type="protein sequence ID" value="ENSP00000243997.3"/>
    <property type="RefSeq nucleotide sequence ID" value="NM_006886.4"/>
    <property type="RefSeq protein sequence ID" value="NP_008817.1"/>
</dbReference>
<dbReference type="UCSC" id="uc002yal.4">
    <property type="organism name" value="human"/>
</dbReference>
<dbReference type="AGR" id="HGNC:838"/>
<dbReference type="CTD" id="514"/>
<dbReference type="DisGeNET" id="514"/>
<dbReference type="GeneCards" id="ATP5F1E"/>
<dbReference type="HGNC" id="HGNC:838">
    <property type="gene designation" value="ATP5F1E"/>
</dbReference>
<dbReference type="HPA" id="ENSG00000124172">
    <property type="expression patterns" value="Low tissue specificity"/>
</dbReference>
<dbReference type="MalaCards" id="ATP5F1E"/>
<dbReference type="MIM" id="606153">
    <property type="type" value="gene"/>
</dbReference>
<dbReference type="MIM" id="614053">
    <property type="type" value="phenotype"/>
</dbReference>
<dbReference type="neXtProt" id="NX_P56381"/>
<dbReference type="OpenTargets" id="ENSG00000124172"/>
<dbReference type="Orphanet" id="254913">
    <property type="disease" value="Isolated ATP synthase deficiency"/>
</dbReference>
<dbReference type="PharmGKB" id="PA25128"/>
<dbReference type="VEuPathDB" id="HostDB:ENSG00000124172"/>
<dbReference type="eggNOG" id="KOG3495">
    <property type="taxonomic scope" value="Eukaryota"/>
</dbReference>
<dbReference type="GeneTree" id="ENSGT00390000015470"/>
<dbReference type="HOGENOM" id="CLU_187039_4_0_1"/>
<dbReference type="InParanoid" id="P56381"/>
<dbReference type="OMA" id="HIRITKW"/>
<dbReference type="OrthoDB" id="269124at2759"/>
<dbReference type="PAN-GO" id="P56381">
    <property type="GO annotations" value="3 GO annotations based on evolutionary models"/>
</dbReference>
<dbReference type="PhylomeDB" id="P56381"/>
<dbReference type="TreeFam" id="TF300278"/>
<dbReference type="BioCyc" id="MetaCyc:HS04727-MONOMER"/>
<dbReference type="PathwayCommons" id="P56381"/>
<dbReference type="Reactome" id="R-HSA-163210">
    <property type="pathway name" value="Formation of ATP by chemiosmotic coupling"/>
</dbReference>
<dbReference type="Reactome" id="R-HSA-8949613">
    <property type="pathway name" value="Cristae formation"/>
</dbReference>
<dbReference type="SignaLink" id="P56381"/>
<dbReference type="BioGRID-ORCS" id="514">
    <property type="hits" value="332 hits in 655 CRISPR screens"/>
</dbReference>
<dbReference type="GeneWiki" id="ATP5E"/>
<dbReference type="GenomeRNAi" id="514"/>
<dbReference type="Pharos" id="P56381">
    <property type="development level" value="Tbio"/>
</dbReference>
<dbReference type="PRO" id="PR:P56381"/>
<dbReference type="Proteomes" id="UP000005640">
    <property type="component" value="Chromosome 20"/>
</dbReference>
<dbReference type="RNAct" id="P56381">
    <property type="molecule type" value="protein"/>
</dbReference>
<dbReference type="Bgee" id="ENSG00000124172">
    <property type="expression patterns" value="Expressed in renal medulla and 214 other cell types or tissues"/>
</dbReference>
<dbReference type="GO" id="GO:0005743">
    <property type="term" value="C:mitochondrial inner membrane"/>
    <property type="evidence" value="ECO:0000318"/>
    <property type="project" value="GO_Central"/>
</dbReference>
<dbReference type="GO" id="GO:0005759">
    <property type="term" value="C:mitochondrial matrix"/>
    <property type="evidence" value="ECO:0000304"/>
    <property type="project" value="Reactome"/>
</dbReference>
<dbReference type="GO" id="GO:0005739">
    <property type="term" value="C:mitochondrion"/>
    <property type="evidence" value="ECO:0006056"/>
    <property type="project" value="FlyBase"/>
</dbReference>
<dbReference type="GO" id="GO:0045259">
    <property type="term" value="C:proton-transporting ATP synthase complex"/>
    <property type="evidence" value="ECO:0000314"/>
    <property type="project" value="UniProtKB"/>
</dbReference>
<dbReference type="GO" id="GO:0016787">
    <property type="term" value="F:hydrolase activity"/>
    <property type="evidence" value="ECO:0007669"/>
    <property type="project" value="UniProtKB-KW"/>
</dbReference>
<dbReference type="GO" id="GO:0046933">
    <property type="term" value="F:proton-transporting ATP synthase activity, rotational mechanism"/>
    <property type="evidence" value="ECO:0007669"/>
    <property type="project" value="InterPro"/>
</dbReference>
<dbReference type="GO" id="GO:0015986">
    <property type="term" value="P:proton motive force-driven ATP synthesis"/>
    <property type="evidence" value="ECO:0000303"/>
    <property type="project" value="ComplexPortal"/>
</dbReference>
<dbReference type="GO" id="GO:0042776">
    <property type="term" value="P:proton motive force-driven mitochondrial ATP synthesis"/>
    <property type="evidence" value="ECO:0000314"/>
    <property type="project" value="UniProtKB"/>
</dbReference>
<dbReference type="CDD" id="cd12153">
    <property type="entry name" value="F1-ATPase_epsilon"/>
    <property type="match status" value="1"/>
</dbReference>
<dbReference type="FunFam" id="1.10.1620.20:FF:000001">
    <property type="entry name" value="ATP synthase subunit epsilon, mitochondrial"/>
    <property type="match status" value="1"/>
</dbReference>
<dbReference type="Gene3D" id="1.10.1620.20">
    <property type="entry name" value="ATP synthase, F1 complex, epsilon subunit superfamily, mitochondrial"/>
    <property type="match status" value="1"/>
</dbReference>
<dbReference type="InterPro" id="IPR006721">
    <property type="entry name" value="ATP_synth_F1_esu_mt"/>
</dbReference>
<dbReference type="InterPro" id="IPR036742">
    <property type="entry name" value="ATP_synth_F1_esu_sf_mt"/>
</dbReference>
<dbReference type="PANTHER" id="PTHR12448">
    <property type="entry name" value="ATP SYNTHASE EPSILON CHAIN, MITOCHONDRIAL"/>
    <property type="match status" value="1"/>
</dbReference>
<dbReference type="PANTHER" id="PTHR12448:SF0">
    <property type="entry name" value="ATP SYNTHASE SUBUNIT EPSILON, MITOCHONDRIAL"/>
    <property type="match status" value="1"/>
</dbReference>
<dbReference type="Pfam" id="PF04627">
    <property type="entry name" value="ATP-synt_Eps"/>
    <property type="match status" value="1"/>
</dbReference>
<dbReference type="SUPFAM" id="SSF48690">
    <property type="entry name" value="Epsilon subunit of mitochondrial F1F0-ATP synthase"/>
    <property type="match status" value="1"/>
</dbReference>
<feature type="chain" id="PRO_0000071662" description="ATP synthase F(1) complex subunit epsilon, mitochondrial">
    <location>
        <begin position="1"/>
        <end position="51"/>
    </location>
</feature>
<feature type="modified residue" description="N6-acetyllysine; alternate" evidence="18">
    <location>
        <position position="21"/>
    </location>
</feature>
<feature type="modified residue" description="N6-succinyllysine; alternate" evidence="2">
    <location>
        <position position="21"/>
    </location>
</feature>
<feature type="modified residue" description="N6-acetyllysine; alternate" evidence="2">
    <location>
        <position position="32"/>
    </location>
</feature>
<feature type="modified residue" description="N6-succinyllysine; alternate" evidence="2">
    <location>
        <position position="32"/>
    </location>
</feature>
<feature type="modified residue" description="N6-acetyllysine; alternate" evidence="2">
    <location>
        <position position="37"/>
    </location>
</feature>
<feature type="modified residue" description="N6-succinyllysine; alternate" evidence="2">
    <location>
        <position position="37"/>
    </location>
</feature>
<feature type="modified residue" description="N6-acetyllysine" evidence="2">
    <location>
        <position position="44"/>
    </location>
</feature>
<feature type="sequence variant" id="VAR_066211" description="In MC5DN3; likely pathogenic; dbSNP:rs387906929." evidence="4 5">
    <original>Y</original>
    <variation>C</variation>
    <location>
        <position position="12"/>
    </location>
</feature>
<feature type="helix" evidence="19">
    <location>
        <begin position="4"/>
        <end position="8"/>
    </location>
</feature>
<feature type="helix" evidence="19">
    <location>
        <begin position="12"/>
        <end position="25"/>
    </location>
</feature>
<feature type="helix" evidence="19">
    <location>
        <begin position="29"/>
        <end position="38"/>
    </location>
</feature>
<feature type="strand" evidence="20">
    <location>
        <begin position="44"/>
        <end position="46"/>
    </location>
</feature>
<evidence type="ECO:0000250" key="1">
    <source>
        <dbReference type="UniProtKB" id="P19483"/>
    </source>
</evidence>
<evidence type="ECO:0000250" key="2">
    <source>
        <dbReference type="UniProtKB" id="P56382"/>
    </source>
</evidence>
<evidence type="ECO:0000269" key="3">
    <source>
    </source>
</evidence>
<evidence type="ECO:0000269" key="4">
    <source>
    </source>
</evidence>
<evidence type="ECO:0000269" key="5">
    <source>
    </source>
</evidence>
<evidence type="ECO:0000269" key="6">
    <source>
    </source>
</evidence>
<evidence type="ECO:0000305" key="7"/>
<evidence type="ECO:0000305" key="8">
    <source>
    </source>
</evidence>
<evidence type="ECO:0000312" key="9">
    <source>
        <dbReference type="HGNC" id="HGNC:838"/>
    </source>
</evidence>
<evidence type="ECO:0007744" key="10">
    <source>
        <dbReference type="PDB" id="8H9F"/>
    </source>
</evidence>
<evidence type="ECO:0007744" key="11">
    <source>
        <dbReference type="PDB" id="8H9J"/>
    </source>
</evidence>
<evidence type="ECO:0007744" key="12">
    <source>
        <dbReference type="PDB" id="8H9M"/>
    </source>
</evidence>
<evidence type="ECO:0007744" key="13">
    <source>
        <dbReference type="PDB" id="8H9Q"/>
    </source>
</evidence>
<evidence type="ECO:0007744" key="14">
    <source>
        <dbReference type="PDB" id="8H9S"/>
    </source>
</evidence>
<evidence type="ECO:0007744" key="15">
    <source>
        <dbReference type="PDB" id="8H9T"/>
    </source>
</evidence>
<evidence type="ECO:0007744" key="16">
    <source>
        <dbReference type="PDB" id="8H9U"/>
    </source>
</evidence>
<evidence type="ECO:0007744" key="17">
    <source>
        <dbReference type="PDB" id="8H9V"/>
    </source>
</evidence>
<evidence type="ECO:0007744" key="18">
    <source>
    </source>
</evidence>
<evidence type="ECO:0007829" key="19">
    <source>
        <dbReference type="PDB" id="8H9M"/>
    </source>
</evidence>
<evidence type="ECO:0007829" key="20">
    <source>
        <dbReference type="PDB" id="8H9V"/>
    </source>
</evidence>
<protein>
    <recommendedName>
        <fullName evidence="7">ATP synthase F(1) complex subunit epsilon, mitochondrial</fullName>
        <shortName>ATPase subunit epsilon</shortName>
    </recommendedName>
    <alternativeName>
        <fullName evidence="9">ATP synthase F1 subunit epsilon</fullName>
    </alternativeName>
</protein>
<sequence>MVAYWRQAGLSYIRYSQICAKAVRDALKTEFKANAEKTSGSNVKIVKVKKE</sequence>
<keyword id="KW-0002">3D-structure</keyword>
<keyword id="KW-0007">Acetylation</keyword>
<keyword id="KW-0066">ATP synthesis</keyword>
<keyword id="KW-0139">CF(1)</keyword>
<keyword id="KW-0225">Disease variant</keyword>
<keyword id="KW-0375">Hydrogen ion transport</keyword>
<keyword id="KW-0378">Hydrolase</keyword>
<keyword id="KW-0406">Ion transport</keyword>
<keyword id="KW-0472">Membrane</keyword>
<keyword id="KW-0496">Mitochondrion</keyword>
<keyword id="KW-0999">Mitochondrion inner membrane</keyword>
<keyword id="KW-1274">Primary mitochondrial disease</keyword>
<keyword id="KW-1267">Proteomics identification</keyword>
<keyword id="KW-1185">Reference proteome</keyword>
<keyword id="KW-0813">Transport</keyword>
<comment type="function">
    <text evidence="1 3 6 8">Subunit epsilon, of the mitochondrial membrane ATP synthase complex (F(1)F(0) ATP synthase or Complex V) that produces ATP from ADP in the presence of a proton gradient across the membrane which is generated by electron transport complexes of the respiratory chain (PubMed:37244256). ATP synthase complex consist of a soluble F(1) head domain - the catalytic core - and a membrane F(1) domain - the membrane proton channel (PubMed:37244256). These two domains are linked by a central stalk rotating inside the F(1) region and a stationary peripheral stalk (PubMed:37244256). During catalysis, ATP synthesis in the catalytic domain of F(1) is coupled via a rotary mechanism of the central stalk subunits to proton translocation (Probable). In vivo, can only synthesize ATP although its ATP hydrolase activity can be activated artificially in vitro (By similarity). May be essential for the assembly of F(1) and may play an important role in the incorporation of the hydrophobic subunit c into the F(1)-c oligomer rotor of the mitochondrial ATP synthase complex (PubMed:20026007).</text>
</comment>
<comment type="subunit">
    <text evidence="6">Component of the ATP synthase complex composed at least of ATP5F1A/subunit alpha, ATP5F1B/subunit beta, ATP5MC1/subunit c (homooctomer), MT-ATP6/subunit a, MT-ATP8/subunit 8, ATP5ME/subunit e, ATP5MF/subunit f, ATP5MG/subunit g, ATP5MK/subunit k, ATP5MJ/subunit j, ATP5F1C/subunit gamma, ATP5F1D/subunit delta, ATP5F1E/subunit epsilon, ATP5PF/subunit F6, ATP5PB/subunit b, ATP5PD/subunit d, ATP5PO/subunit OSCP (PubMed:37244256). ATP synthase complex consists of a soluble F(1) head domain (subunits alpha(3) and beta(3)) - the catalytic core - and a membrane F(0) domain - the membrane proton channel (subunits c, a, 8, e, f, g, k and j) (PubMed:37244256). These two domains are linked by a central stalk (subunits gamma, delta, and epsilon) rotating inside the F1 region and a stationary peripheral stalk (subunits F6, b, d, and OSCP) (PubMed:37244256).</text>
</comment>
<comment type="interaction">
    <interactant intactId="EBI-3904845">
        <id>P56381</id>
    </interactant>
    <interactant intactId="EBI-11522760">
        <id>Q6RW13-2</id>
        <label>AGTRAP</label>
    </interactant>
    <organismsDiffer>false</organismsDiffer>
    <experiments>3</experiments>
</comment>
<comment type="interaction">
    <interactant intactId="EBI-3904845">
        <id>P56381</id>
    </interactant>
    <interactant intactId="EBI-1049505">
        <id>P30049</id>
        <label>ATP5F1D</label>
    </interactant>
    <organismsDiffer>false</organismsDiffer>
    <experiments>5</experiments>
</comment>
<comment type="subcellular location">
    <subcellularLocation>
        <location>Mitochondrion</location>
    </subcellularLocation>
    <subcellularLocation>
        <location>Mitochondrion inner membrane</location>
    </subcellularLocation>
</comment>
<comment type="tissue specificity">
    <text>Ubiquitous.</text>
</comment>
<comment type="disease" evidence="4 5">
    <disease id="DI-03148">
        <name>Mitochondrial complex V deficiency, nuclear type 3</name>
        <acronym>MC5DN3</acronym>
        <description>A mitochondrial disorder with heterogeneous clinical manifestations including dysmorphic features, psychomotor retardation, hypotonia, growth retardation, cardiomyopathy, enlarged liver, hypoplastic kidneys and elevated lactate levels in urine, plasma and cerebrospinal fluid.</description>
        <dbReference type="MIM" id="614053"/>
    </disease>
    <text>The disease is caused by variants affecting the gene represented in this entry.</text>
</comment>
<comment type="similarity">
    <text evidence="7">Belongs to the eukaryotic ATPase epsilon family.</text>
</comment>
<gene>
    <name evidence="9" type="primary">ATP5F1E</name>
    <name evidence="9" type="synonym">ATP5E</name>
</gene>